<reference key="1">
    <citation type="submission" date="2004-12" db="EMBL/GenBank/DDBJ databases">
        <title>Phylogeny of xylosyltransferases.</title>
        <authorList>
            <person name="Kiefer-Meyer M.C."/>
            <person name="Pagny S."/>
            <person name="Durambure G."/>
            <person name="Faye L."/>
            <person name="Gomord V."/>
            <person name="Mollicone R."/>
            <person name="Oriol R."/>
        </authorList>
    </citation>
    <scope>NUCLEOTIDE SEQUENCE [MRNA]</scope>
</reference>
<sequence>MHLSAVLNALLVSVLAAVLWKHVRLREHAAALEEEVAAGRQAPAPGPAPRADYARALQLLSEGGTHMVCTGRTHTDRVCRFKWLCYSNEAEEFIFFHGNASVMLPNLGSRRFQPALLDLSTVEDHNTQYFNFVELPAAALRFLPKPVFVPDVALVANRFNPDNLMHVFHDDLLPLFYTLRQFPGLAHEARLFFMEGWSEGAHFDLYKLLSPKQPLLRAQLKTLGRLLCFSHAFVGLSKVTTWYQYGFVQPQGPKANILVSGNEIRQFARFMMEKLNVSQAGAPLGEEYILVFSRTQNRLILNEAELLLALAQEFQMKTVTVSLEDQAFADVVRLVSNASMLVSVHGAQLVTALFLPRGATVVELFPYAVNPDHYTPYKTLATLPGMDLQYVAWRNMMPENTVTHPERPWDQGGIAHLDRAEQARILQSREVPRHLCCRNPEWLFRIYQDTKVDIPSLIQTVRRVVKGRPGPRKQKWTVGLYPGKVREARCQASVQGASEARLTVSWQIPWNLKYLKVREVKYEVWLQEQGENTYVPYILALQNHTFTENIKPFTTYLVWVRCIFNKTLLGPFADVLVCNT</sequence>
<organism>
    <name type="scientific">Canis lupus familiaris</name>
    <name type="common">Dog</name>
    <name type="synonym">Canis familiaris</name>
    <dbReference type="NCBI Taxonomy" id="9615"/>
    <lineage>
        <taxon>Eukaryota</taxon>
        <taxon>Metazoa</taxon>
        <taxon>Chordata</taxon>
        <taxon>Craniata</taxon>
        <taxon>Vertebrata</taxon>
        <taxon>Euteleostomi</taxon>
        <taxon>Mammalia</taxon>
        <taxon>Eutheria</taxon>
        <taxon>Laurasiatheria</taxon>
        <taxon>Carnivora</taxon>
        <taxon>Caniformia</taxon>
        <taxon>Canidae</taxon>
        <taxon>Canis</taxon>
    </lineage>
</organism>
<gene>
    <name type="primary">POMGNT2</name>
    <name type="synonym">AGO61</name>
    <name type="synonym">GTDC2</name>
</gene>
<dbReference type="EC" id="2.4.1.312" evidence="1"/>
<dbReference type="EMBL" id="AJ868535">
    <property type="protein sequence ID" value="CAI30869.1"/>
    <property type="molecule type" value="mRNA"/>
</dbReference>
<dbReference type="RefSeq" id="NP_001010957.1">
    <property type="nucleotide sequence ID" value="NM_001010957.1"/>
</dbReference>
<dbReference type="RefSeq" id="XP_005634220.1">
    <property type="nucleotide sequence ID" value="XM_005634163.2"/>
</dbReference>
<dbReference type="SMR" id="Q5NDE9"/>
<dbReference type="FunCoup" id="Q5NDE9">
    <property type="interactions" value="10"/>
</dbReference>
<dbReference type="STRING" id="9615.ENSCAFP00000043129"/>
<dbReference type="CAZy" id="GT61">
    <property type="family name" value="Glycosyltransferase Family 61"/>
</dbReference>
<dbReference type="GlyCosmos" id="Q5NDE9">
    <property type="glycosylation" value="2 sites, No reported glycans"/>
</dbReference>
<dbReference type="PaxDb" id="9612-ENSCAFP00000043129"/>
<dbReference type="Ensembl" id="ENSCAFT00000095069.1">
    <property type="protein sequence ID" value="ENSCAFP00000073358.1"/>
    <property type="gene ID" value="ENSCAFG00000030823.3"/>
</dbReference>
<dbReference type="Ensembl" id="ENSCAFT00845037846.1">
    <property type="protein sequence ID" value="ENSCAFP00845029654.1"/>
    <property type="gene ID" value="ENSCAFG00845021458.1"/>
</dbReference>
<dbReference type="GeneID" id="485621"/>
<dbReference type="KEGG" id="cfa:485621"/>
<dbReference type="CTD" id="84892"/>
<dbReference type="VEuPathDB" id="HostDB:ENSCAFG00845021458"/>
<dbReference type="eggNOG" id="KOG4698">
    <property type="taxonomic scope" value="Eukaryota"/>
</dbReference>
<dbReference type="GeneTree" id="ENSGT00940000160695"/>
<dbReference type="InParanoid" id="Q5NDE9"/>
<dbReference type="OrthoDB" id="529273at2759"/>
<dbReference type="Reactome" id="R-CFA-5173105">
    <property type="pathway name" value="O-linked glycosylation"/>
</dbReference>
<dbReference type="UniPathway" id="UPA00378"/>
<dbReference type="Proteomes" id="UP000002254">
    <property type="component" value="Chromosome 23"/>
</dbReference>
<dbReference type="Proteomes" id="UP000694429">
    <property type="component" value="Unplaced"/>
</dbReference>
<dbReference type="Proteomes" id="UP000694542">
    <property type="component" value="Unplaced"/>
</dbReference>
<dbReference type="Proteomes" id="UP000805418">
    <property type="component" value="Chromosome 23"/>
</dbReference>
<dbReference type="GO" id="GO:0005783">
    <property type="term" value="C:endoplasmic reticulum"/>
    <property type="evidence" value="ECO:0000250"/>
    <property type="project" value="UniProtKB"/>
</dbReference>
<dbReference type="GO" id="GO:0005789">
    <property type="term" value="C:endoplasmic reticulum membrane"/>
    <property type="evidence" value="ECO:0007669"/>
    <property type="project" value="UniProtKB-SubCell"/>
</dbReference>
<dbReference type="GO" id="GO:0008375">
    <property type="term" value="F:acetylglucosaminyltransferase activity"/>
    <property type="evidence" value="ECO:0000250"/>
    <property type="project" value="UniProtKB"/>
</dbReference>
<dbReference type="GO" id="GO:0001764">
    <property type="term" value="P:neuron migration"/>
    <property type="evidence" value="ECO:0000250"/>
    <property type="project" value="UniProtKB"/>
</dbReference>
<dbReference type="GO" id="GO:0006493">
    <property type="term" value="P:protein O-linked glycosylation"/>
    <property type="evidence" value="ECO:0000250"/>
    <property type="project" value="UniProtKB"/>
</dbReference>
<dbReference type="GO" id="GO:0035269">
    <property type="term" value="P:protein O-linked mannosylation"/>
    <property type="evidence" value="ECO:0000250"/>
    <property type="project" value="UniProtKB"/>
</dbReference>
<dbReference type="CDD" id="cd00063">
    <property type="entry name" value="FN3"/>
    <property type="match status" value="1"/>
</dbReference>
<dbReference type="FunFam" id="2.60.40.10:FF:001371">
    <property type="entry name" value="Protein O-linked mannose N-acetylglucosaminyltransferase 2 (beta 1,4-)"/>
    <property type="match status" value="1"/>
</dbReference>
<dbReference type="Gene3D" id="2.60.40.10">
    <property type="entry name" value="Immunoglobulins"/>
    <property type="match status" value="1"/>
</dbReference>
<dbReference type="InterPro" id="IPR003961">
    <property type="entry name" value="FN3_dom"/>
</dbReference>
<dbReference type="InterPro" id="IPR036116">
    <property type="entry name" value="FN3_sf"/>
</dbReference>
<dbReference type="InterPro" id="IPR049625">
    <property type="entry name" value="Glyco_transf_61_cat"/>
</dbReference>
<dbReference type="InterPro" id="IPR007657">
    <property type="entry name" value="Glycosyltransferase_61"/>
</dbReference>
<dbReference type="InterPro" id="IPR013783">
    <property type="entry name" value="Ig-like_fold"/>
</dbReference>
<dbReference type="PANTHER" id="PTHR20961">
    <property type="entry name" value="GLYCOSYLTRANSFERASE"/>
    <property type="match status" value="1"/>
</dbReference>
<dbReference type="PANTHER" id="PTHR20961:SF38">
    <property type="entry name" value="PROTEIN O-LINKED-MANNOSE BETA-1,4-N-ACETYLGLUCOSAMINYLTRANSFERASE 2"/>
    <property type="match status" value="1"/>
</dbReference>
<dbReference type="Pfam" id="PF04577">
    <property type="entry name" value="Glyco_transf_61"/>
    <property type="match status" value="1"/>
</dbReference>
<dbReference type="SUPFAM" id="SSF49265">
    <property type="entry name" value="Fibronectin type III"/>
    <property type="match status" value="1"/>
</dbReference>
<dbReference type="PROSITE" id="PS50853">
    <property type="entry name" value="FN3"/>
    <property type="match status" value="1"/>
</dbReference>
<comment type="function">
    <text evidence="1">O-linked mannose beta-1,4-N-acetylglucosaminyltransferase that transfers UDP-N-acetyl-D-glucosamine to the 4-position of the mannose to generate N-acetyl-D-glucosamine-beta-1,4-O-D-mannosylprotein. Involved in the biosynthesis of the phosphorylated O-mannosyl trisaccharide (N-acetylgalactosamine-beta-3-N-acetylglucosamine-beta-4-(phosphate-6-)mannose), a carbohydrate structure present in alpha-dystroglycan (DAG1), which is required for binding laminin G-like domain-containing extracellular proteins with high affinity (By similarity).</text>
</comment>
<comment type="catalytic activity">
    <reaction evidence="1">
        <text>3-O-(alpha-D-mannosyl)-L-threonyl-[protein] + UDP-N-acetyl-alpha-D-glucosamine = 3-O-(N-acetyl-beta-D-glucosaminyl-(1-&gt;4)-alpha-D-mannosyl)-L-threonyl-[protein] + UDP + H(+)</text>
        <dbReference type="Rhea" id="RHEA:37663"/>
        <dbReference type="Rhea" id="RHEA-COMP:13547"/>
        <dbReference type="Rhea" id="RHEA-COMP:13618"/>
        <dbReference type="ChEBI" id="CHEBI:15378"/>
        <dbReference type="ChEBI" id="CHEBI:57705"/>
        <dbReference type="ChEBI" id="CHEBI:58223"/>
        <dbReference type="ChEBI" id="CHEBI:137323"/>
        <dbReference type="ChEBI" id="CHEBI:137540"/>
        <dbReference type="EC" id="2.4.1.312"/>
    </reaction>
</comment>
<comment type="pathway">
    <text evidence="1">Protein modification; protein glycosylation.</text>
</comment>
<comment type="subcellular location">
    <subcellularLocation>
        <location evidence="1">Endoplasmic reticulum membrane</location>
        <topology evidence="1">Single-pass type II membrane protein</topology>
    </subcellularLocation>
</comment>
<comment type="similarity">
    <text evidence="4">Belongs to the glycosyltransferase 61 family.</text>
</comment>
<proteinExistence type="evidence at transcript level"/>
<keyword id="KW-0256">Endoplasmic reticulum</keyword>
<keyword id="KW-0325">Glycoprotein</keyword>
<keyword id="KW-0328">Glycosyltransferase</keyword>
<keyword id="KW-0472">Membrane</keyword>
<keyword id="KW-1185">Reference proteome</keyword>
<keyword id="KW-0735">Signal-anchor</keyword>
<keyword id="KW-0808">Transferase</keyword>
<keyword id="KW-0812">Transmembrane</keyword>
<keyword id="KW-1133">Transmembrane helix</keyword>
<accession>Q5NDE9</accession>
<evidence type="ECO:0000250" key="1">
    <source>
        <dbReference type="UniProtKB" id="Q8NAT1"/>
    </source>
</evidence>
<evidence type="ECO:0000255" key="2"/>
<evidence type="ECO:0000255" key="3">
    <source>
        <dbReference type="PROSITE-ProRule" id="PRU00316"/>
    </source>
</evidence>
<evidence type="ECO:0000305" key="4"/>
<name>PMGT2_CANLF</name>
<feature type="chain" id="PRO_0000249013" description="Protein O-linked-mannose beta-1,4-N-acetylglucosaminyltransferase 2">
    <location>
        <begin position="1"/>
        <end position="580"/>
    </location>
</feature>
<feature type="topological domain" description="Cytoplasmic" evidence="2">
    <location>
        <begin position="1"/>
        <end position="4"/>
    </location>
</feature>
<feature type="transmembrane region" description="Helical; Signal-anchor for type II membrane protein" evidence="2">
    <location>
        <begin position="5"/>
        <end position="25"/>
    </location>
</feature>
<feature type="topological domain" description="Lumenal" evidence="2">
    <location>
        <begin position="26"/>
        <end position="580"/>
    </location>
</feature>
<feature type="domain" description="Fibronectin type-III" evidence="3">
    <location>
        <begin position="488"/>
        <end position="580"/>
    </location>
</feature>
<feature type="glycosylation site" description="N-linked (GlcNAc...) asparagine" evidence="2">
    <location>
        <position position="99"/>
    </location>
</feature>
<feature type="glycosylation site" description="N-linked (GlcNAc...) asparagine" evidence="2">
    <location>
        <position position="276"/>
    </location>
</feature>
<protein>
    <recommendedName>
        <fullName>Protein O-linked-mannose beta-1,4-N-acetylglucosaminyltransferase 2</fullName>
        <shortName>POMGnT2</shortName>
        <ecNumber evidence="1">2.4.1.312</ecNumber>
    </recommendedName>
    <alternativeName>
        <fullName>Extracellular O-linked N-acetylglucosamine transferase-like</fullName>
    </alternativeName>
    <alternativeName>
        <fullName>Glycosyltransferase-like domain-containing protein 2</fullName>
    </alternativeName>
</protein>